<gene>
    <name evidence="1" type="primary">rpoZ</name>
    <name type="ordered locus">MGAS2096_Spy1361</name>
</gene>
<accession>Q1JAJ5</accession>
<sequence length="105" mass="11837">MMLKPSIDTLLDKVPSKYSLVILQAKRAHELEAGATPTQEFKSVKSTLQALEEIESGNVVIHPDPSAKREAVRAKIEAERLAKEEEERKIKEQIAKEKEEEGEKI</sequence>
<name>RPOZ_STRPB</name>
<comment type="function">
    <text evidence="1">Promotes RNA polymerase assembly. Latches the N- and C-terminal regions of the beta' subunit thereby facilitating its interaction with the beta and alpha subunits.</text>
</comment>
<comment type="catalytic activity">
    <reaction evidence="1">
        <text>RNA(n) + a ribonucleoside 5'-triphosphate = RNA(n+1) + diphosphate</text>
        <dbReference type="Rhea" id="RHEA:21248"/>
        <dbReference type="Rhea" id="RHEA-COMP:14527"/>
        <dbReference type="Rhea" id="RHEA-COMP:17342"/>
        <dbReference type="ChEBI" id="CHEBI:33019"/>
        <dbReference type="ChEBI" id="CHEBI:61557"/>
        <dbReference type="ChEBI" id="CHEBI:140395"/>
        <dbReference type="EC" id="2.7.7.6"/>
    </reaction>
</comment>
<comment type="subunit">
    <text evidence="1">The RNAP catalytic core consists of 2 alpha, 1 beta, 1 beta' and 1 omega subunit. When a sigma factor is associated with the core the holoenzyme is formed, which can initiate transcription.</text>
</comment>
<comment type="similarity">
    <text evidence="1">Belongs to the RNA polymerase subunit omega family.</text>
</comment>
<dbReference type="EC" id="2.7.7.6" evidence="1"/>
<dbReference type="EMBL" id="CP000261">
    <property type="protein sequence ID" value="ABF36413.1"/>
    <property type="molecule type" value="Genomic_DNA"/>
</dbReference>
<dbReference type="SMR" id="Q1JAJ5"/>
<dbReference type="KEGG" id="spj:MGAS2096_Spy1361"/>
<dbReference type="HOGENOM" id="CLU_125406_0_0_9"/>
<dbReference type="GO" id="GO:0000428">
    <property type="term" value="C:DNA-directed RNA polymerase complex"/>
    <property type="evidence" value="ECO:0007669"/>
    <property type="project" value="UniProtKB-KW"/>
</dbReference>
<dbReference type="GO" id="GO:0003677">
    <property type="term" value="F:DNA binding"/>
    <property type="evidence" value="ECO:0007669"/>
    <property type="project" value="UniProtKB-UniRule"/>
</dbReference>
<dbReference type="GO" id="GO:0003899">
    <property type="term" value="F:DNA-directed RNA polymerase activity"/>
    <property type="evidence" value="ECO:0007669"/>
    <property type="project" value="UniProtKB-UniRule"/>
</dbReference>
<dbReference type="GO" id="GO:0006351">
    <property type="term" value="P:DNA-templated transcription"/>
    <property type="evidence" value="ECO:0007669"/>
    <property type="project" value="UniProtKB-UniRule"/>
</dbReference>
<dbReference type="Gene3D" id="3.90.940.10">
    <property type="match status" value="1"/>
</dbReference>
<dbReference type="HAMAP" id="MF_00366">
    <property type="entry name" value="RNApol_bact_RpoZ"/>
    <property type="match status" value="1"/>
</dbReference>
<dbReference type="InterPro" id="IPR003716">
    <property type="entry name" value="DNA-dir_RNA_pol_omega"/>
</dbReference>
<dbReference type="InterPro" id="IPR006110">
    <property type="entry name" value="Pol_omega/Rpo6/RPB6"/>
</dbReference>
<dbReference type="InterPro" id="IPR036161">
    <property type="entry name" value="RPB6/omega-like_sf"/>
</dbReference>
<dbReference type="NCBIfam" id="TIGR00690">
    <property type="entry name" value="rpoZ"/>
    <property type="match status" value="1"/>
</dbReference>
<dbReference type="PANTHER" id="PTHR34476">
    <property type="entry name" value="DNA-DIRECTED RNA POLYMERASE SUBUNIT OMEGA"/>
    <property type="match status" value="1"/>
</dbReference>
<dbReference type="PANTHER" id="PTHR34476:SF1">
    <property type="entry name" value="DNA-DIRECTED RNA POLYMERASE SUBUNIT OMEGA"/>
    <property type="match status" value="1"/>
</dbReference>
<dbReference type="Pfam" id="PF01192">
    <property type="entry name" value="RNA_pol_Rpb6"/>
    <property type="match status" value="1"/>
</dbReference>
<dbReference type="SMART" id="SM01409">
    <property type="entry name" value="RNA_pol_Rpb6"/>
    <property type="match status" value="1"/>
</dbReference>
<dbReference type="SUPFAM" id="SSF63562">
    <property type="entry name" value="RPB6/omega subunit-like"/>
    <property type="match status" value="1"/>
</dbReference>
<evidence type="ECO:0000255" key="1">
    <source>
        <dbReference type="HAMAP-Rule" id="MF_00366"/>
    </source>
</evidence>
<reference key="1">
    <citation type="journal article" date="2006" name="Proc. Natl. Acad. Sci. U.S.A.">
        <title>Molecular genetic anatomy of inter- and intraserotype variation in the human bacterial pathogen group A Streptococcus.</title>
        <authorList>
            <person name="Beres S.B."/>
            <person name="Richter E.W."/>
            <person name="Nagiec M.J."/>
            <person name="Sumby P."/>
            <person name="Porcella S.F."/>
            <person name="DeLeo F.R."/>
            <person name="Musser J.M."/>
        </authorList>
    </citation>
    <scope>NUCLEOTIDE SEQUENCE [LARGE SCALE GENOMIC DNA]</scope>
    <source>
        <strain>MGAS2096</strain>
    </source>
</reference>
<proteinExistence type="inferred from homology"/>
<feature type="chain" id="PRO_1000006024" description="DNA-directed RNA polymerase subunit omega">
    <location>
        <begin position="1"/>
        <end position="105"/>
    </location>
</feature>
<keyword id="KW-0240">DNA-directed RNA polymerase</keyword>
<keyword id="KW-0548">Nucleotidyltransferase</keyword>
<keyword id="KW-0804">Transcription</keyword>
<keyword id="KW-0808">Transferase</keyword>
<protein>
    <recommendedName>
        <fullName evidence="1">DNA-directed RNA polymerase subunit omega</fullName>
        <shortName evidence="1">RNAP omega subunit</shortName>
        <ecNumber evidence="1">2.7.7.6</ecNumber>
    </recommendedName>
    <alternativeName>
        <fullName evidence="1">RNA polymerase omega subunit</fullName>
    </alternativeName>
    <alternativeName>
        <fullName evidence="1">Transcriptase subunit omega</fullName>
    </alternativeName>
</protein>
<organism>
    <name type="scientific">Streptococcus pyogenes serotype M12 (strain MGAS2096)</name>
    <dbReference type="NCBI Taxonomy" id="370553"/>
    <lineage>
        <taxon>Bacteria</taxon>
        <taxon>Bacillati</taxon>
        <taxon>Bacillota</taxon>
        <taxon>Bacilli</taxon>
        <taxon>Lactobacillales</taxon>
        <taxon>Streptococcaceae</taxon>
        <taxon>Streptococcus</taxon>
    </lineage>
</organism>